<evidence type="ECO:0000250" key="1"/>
<evidence type="ECO:0000255" key="2">
    <source>
        <dbReference type="HAMAP-Rule" id="MF_00118"/>
    </source>
</evidence>
<evidence type="ECO:0000255" key="3">
    <source>
        <dbReference type="PROSITE-ProRule" id="PRU01059"/>
    </source>
</evidence>
<protein>
    <recommendedName>
        <fullName>Elongation factor Tu, chloroplastic</fullName>
        <shortName>EF-Tu</shortName>
        <ecNumber evidence="2">3.6.5.3</ecNumber>
    </recommendedName>
</protein>
<organism>
    <name type="scientific">Mantoniella squamata</name>
    <name type="common">Unicellular alga</name>
    <dbReference type="NCBI Taxonomy" id="13608"/>
    <lineage>
        <taxon>Eukaryota</taxon>
        <taxon>Viridiplantae</taxon>
        <taxon>Chlorophyta</taxon>
        <taxon>Mamiellophyceae</taxon>
        <taxon>Mamiellales</taxon>
        <taxon>Mamiellaceae</taxon>
        <taxon>Mantoniella</taxon>
    </lineage>
</organism>
<keyword id="KW-0150">Chloroplast</keyword>
<keyword id="KW-0251">Elongation factor</keyword>
<keyword id="KW-0342">GTP-binding</keyword>
<keyword id="KW-0378">Hydrolase</keyword>
<keyword id="KW-0547">Nucleotide-binding</keyword>
<keyword id="KW-0934">Plastid</keyword>
<keyword id="KW-0648">Protein biosynthesis</keyword>
<geneLocation type="chloroplast"/>
<feature type="chain" id="PRO_0000091464" description="Elongation factor Tu, chloroplastic">
    <location>
        <begin position="1" status="less than"/>
        <end position="235" status="greater than"/>
    </location>
</feature>
<feature type="domain" description="tr-type G" evidence="3">
    <location>
        <begin position="1" status="less than"/>
        <end position="125"/>
    </location>
</feature>
<feature type="binding site" evidence="1">
    <location>
        <begin position="47"/>
        <end position="50"/>
    </location>
    <ligand>
        <name>GTP</name>
        <dbReference type="ChEBI" id="CHEBI:37565"/>
    </ligand>
</feature>
<feature type="non-terminal residue">
    <location>
        <position position="1"/>
    </location>
</feature>
<feature type="non-terminal residue">
    <location>
        <position position="235"/>
    </location>
</feature>
<reference key="1">
    <citation type="journal article" date="1995" name="Mol. Phylogenet. Evol.">
        <title>Phylogenetic analysis of tufA sequences indicates a cyanobacterial origin of all plastids.</title>
        <authorList>
            <person name="Delwiche C.F."/>
            <person name="Kuhsel M."/>
            <person name="Palmer J.D."/>
        </authorList>
    </citation>
    <scope>NUCLEOTIDE SEQUENCE [GENOMIC DNA]</scope>
    <source>
        <strain>UTEX LB 990</strain>
    </source>
</reference>
<dbReference type="EC" id="3.6.5.3" evidence="2"/>
<dbReference type="EMBL" id="U09438">
    <property type="protein sequence ID" value="AAA87695.1"/>
    <property type="molecule type" value="Genomic_DNA"/>
</dbReference>
<dbReference type="SMR" id="P50379"/>
<dbReference type="GO" id="GO:0009507">
    <property type="term" value="C:chloroplast"/>
    <property type="evidence" value="ECO:0007669"/>
    <property type="project" value="UniProtKB-SubCell"/>
</dbReference>
<dbReference type="GO" id="GO:0005739">
    <property type="term" value="C:mitochondrion"/>
    <property type="evidence" value="ECO:0007669"/>
    <property type="project" value="TreeGrafter"/>
</dbReference>
<dbReference type="GO" id="GO:0005525">
    <property type="term" value="F:GTP binding"/>
    <property type="evidence" value="ECO:0007669"/>
    <property type="project" value="UniProtKB-KW"/>
</dbReference>
<dbReference type="GO" id="GO:0003924">
    <property type="term" value="F:GTPase activity"/>
    <property type="evidence" value="ECO:0007669"/>
    <property type="project" value="InterPro"/>
</dbReference>
<dbReference type="GO" id="GO:0003746">
    <property type="term" value="F:translation elongation factor activity"/>
    <property type="evidence" value="ECO:0007669"/>
    <property type="project" value="UniProtKB-KW"/>
</dbReference>
<dbReference type="GO" id="GO:0070125">
    <property type="term" value="P:mitochondrial translational elongation"/>
    <property type="evidence" value="ECO:0007669"/>
    <property type="project" value="TreeGrafter"/>
</dbReference>
<dbReference type="CDD" id="cd03697">
    <property type="entry name" value="EFTU_II"/>
    <property type="match status" value="1"/>
</dbReference>
<dbReference type="FunFam" id="2.40.30.10:FF:000001">
    <property type="entry name" value="Elongation factor Tu"/>
    <property type="match status" value="1"/>
</dbReference>
<dbReference type="Gene3D" id="3.40.50.300">
    <property type="entry name" value="P-loop containing nucleotide triphosphate hydrolases"/>
    <property type="match status" value="1"/>
</dbReference>
<dbReference type="Gene3D" id="2.40.30.10">
    <property type="entry name" value="Translation factors"/>
    <property type="match status" value="1"/>
</dbReference>
<dbReference type="InterPro" id="IPR050055">
    <property type="entry name" value="EF-Tu_GTPase"/>
</dbReference>
<dbReference type="InterPro" id="IPR004161">
    <property type="entry name" value="EFTu-like_2"/>
</dbReference>
<dbReference type="InterPro" id="IPR033720">
    <property type="entry name" value="EFTU_2"/>
</dbReference>
<dbReference type="InterPro" id="IPR027417">
    <property type="entry name" value="P-loop_NTPase"/>
</dbReference>
<dbReference type="InterPro" id="IPR000795">
    <property type="entry name" value="T_Tr_GTP-bd_dom"/>
</dbReference>
<dbReference type="InterPro" id="IPR009000">
    <property type="entry name" value="Transl_B-barrel_sf"/>
</dbReference>
<dbReference type="PANTHER" id="PTHR43721:SF5">
    <property type="entry name" value="ELONGATION FACTOR TU, CHLOROPLASTIC"/>
    <property type="match status" value="1"/>
</dbReference>
<dbReference type="PANTHER" id="PTHR43721">
    <property type="entry name" value="ELONGATION FACTOR TU-RELATED"/>
    <property type="match status" value="1"/>
</dbReference>
<dbReference type="Pfam" id="PF00009">
    <property type="entry name" value="GTP_EFTU"/>
    <property type="match status" value="1"/>
</dbReference>
<dbReference type="Pfam" id="PF03144">
    <property type="entry name" value="GTP_EFTU_D2"/>
    <property type="match status" value="1"/>
</dbReference>
<dbReference type="PRINTS" id="PR00315">
    <property type="entry name" value="ELONGATNFCT"/>
</dbReference>
<dbReference type="SUPFAM" id="SSF52540">
    <property type="entry name" value="P-loop containing nucleoside triphosphate hydrolases"/>
    <property type="match status" value="1"/>
</dbReference>
<dbReference type="SUPFAM" id="SSF50447">
    <property type="entry name" value="Translation proteins"/>
    <property type="match status" value="1"/>
</dbReference>
<dbReference type="PROSITE" id="PS51722">
    <property type="entry name" value="G_TR_2"/>
    <property type="match status" value="1"/>
</dbReference>
<gene>
    <name type="primary">tufA</name>
</gene>
<proteinExistence type="inferred from homology"/>
<accession>P50379</accession>
<name>EFTU_MANSQ</name>
<comment type="function">
    <text evidence="2">GTP hydrolase that promotes the GTP-dependent binding of aminoacyl-tRNA to the A-site of ribosomes during protein biosynthesis.</text>
</comment>
<comment type="catalytic activity">
    <reaction evidence="2">
        <text>GTP + H2O = GDP + phosphate + H(+)</text>
        <dbReference type="Rhea" id="RHEA:19669"/>
        <dbReference type="ChEBI" id="CHEBI:15377"/>
        <dbReference type="ChEBI" id="CHEBI:15378"/>
        <dbReference type="ChEBI" id="CHEBI:37565"/>
        <dbReference type="ChEBI" id="CHEBI:43474"/>
        <dbReference type="ChEBI" id="CHEBI:58189"/>
        <dbReference type="EC" id="3.6.5.3"/>
    </reaction>
    <physiologicalReaction direction="left-to-right" evidence="2">
        <dbReference type="Rhea" id="RHEA:19670"/>
    </physiologicalReaction>
</comment>
<comment type="subcellular location">
    <subcellularLocation>
        <location>Plastid</location>
        <location>Chloroplast</location>
    </subcellularLocation>
</comment>
<comment type="similarity">
    <text evidence="3">Belongs to the TRAFAC class translation factor GTPase superfamily. Classic translation factor GTPase family. EF-Tu/EF-1A subfamily.</text>
</comment>
<sequence>KNMITGAAQMDGAILVVSGADGPMPQTKEHILLAKQVGVPNIVVFLNKEDQVDDDELLELVELEVRDTLSSYEFPGDDIPVVPGSALLALEALTEKPAMSAGENKWVDKIFALMDAVDSYIPTPERDTAKTFLMAIEDVFSITGRGTVATGRVERGTVNCGDVVEIVGLGDTREVTVTGLEMFQKHLDESVAGDKVGVLLRGIQKDDIERGMVLAKKGTITPHTKFESQVYVLSK</sequence>